<accession>A8KZE8</accession>
<reference key="1">
    <citation type="journal article" date="2007" name="Genome Res.">
        <title>Genome characteristics of facultatively symbiotic Frankia sp. strains reflect host range and host plant biogeography.</title>
        <authorList>
            <person name="Normand P."/>
            <person name="Lapierre P."/>
            <person name="Tisa L.S."/>
            <person name="Gogarten J.P."/>
            <person name="Alloisio N."/>
            <person name="Bagnarol E."/>
            <person name="Bassi C.A."/>
            <person name="Berry A.M."/>
            <person name="Bickhart D.M."/>
            <person name="Choisne N."/>
            <person name="Couloux A."/>
            <person name="Cournoyer B."/>
            <person name="Cruveiller S."/>
            <person name="Daubin V."/>
            <person name="Demange N."/>
            <person name="Francino M.P."/>
            <person name="Goltsman E."/>
            <person name="Huang Y."/>
            <person name="Kopp O.R."/>
            <person name="Labarre L."/>
            <person name="Lapidus A."/>
            <person name="Lavire C."/>
            <person name="Marechal J."/>
            <person name="Martinez M."/>
            <person name="Mastronunzio J.E."/>
            <person name="Mullin B.C."/>
            <person name="Niemann J."/>
            <person name="Pujic P."/>
            <person name="Rawnsley T."/>
            <person name="Rouy Z."/>
            <person name="Schenowitz C."/>
            <person name="Sellstedt A."/>
            <person name="Tavares F."/>
            <person name="Tomkins J.P."/>
            <person name="Vallenet D."/>
            <person name="Valverde C."/>
            <person name="Wall L.G."/>
            <person name="Wang Y."/>
            <person name="Medigue C."/>
            <person name="Benson D.R."/>
        </authorList>
    </citation>
    <scope>NUCLEOTIDE SEQUENCE [LARGE SCALE GENOMIC DNA]</scope>
    <source>
        <strain>EAN1pec</strain>
    </source>
</reference>
<proteinExistence type="inferred from homology"/>
<evidence type="ECO:0000255" key="1">
    <source>
        <dbReference type="HAMAP-Rule" id="MF_00034"/>
    </source>
</evidence>
<name>RUVC_PARS2</name>
<feature type="chain" id="PRO_1000090527" description="Crossover junction endodeoxyribonuclease RuvC">
    <location>
        <begin position="1"/>
        <end position="178"/>
    </location>
</feature>
<feature type="active site" evidence="1">
    <location>
        <position position="7"/>
    </location>
</feature>
<feature type="active site" evidence="1">
    <location>
        <position position="68"/>
    </location>
</feature>
<feature type="active site" evidence="1">
    <location>
        <position position="141"/>
    </location>
</feature>
<feature type="binding site" evidence="1">
    <location>
        <position position="7"/>
    </location>
    <ligand>
        <name>Mg(2+)</name>
        <dbReference type="ChEBI" id="CHEBI:18420"/>
        <label>1</label>
    </ligand>
</feature>
<feature type="binding site" evidence="1">
    <location>
        <position position="68"/>
    </location>
    <ligand>
        <name>Mg(2+)</name>
        <dbReference type="ChEBI" id="CHEBI:18420"/>
        <label>2</label>
    </ligand>
</feature>
<feature type="binding site" evidence="1">
    <location>
        <position position="141"/>
    </location>
    <ligand>
        <name>Mg(2+)</name>
        <dbReference type="ChEBI" id="CHEBI:18420"/>
        <label>1</label>
    </ligand>
</feature>
<comment type="function">
    <text evidence="1">The RuvA-RuvB-RuvC complex processes Holliday junction (HJ) DNA during genetic recombination and DNA repair. Endonuclease that resolves HJ intermediates. Cleaves cruciform DNA by making single-stranded nicks across the HJ at symmetrical positions within the homologous arms, yielding a 5'-phosphate and a 3'-hydroxyl group; requires a central core of homology in the junction. The consensus cleavage sequence is 5'-(A/T)TT(C/G)-3'. Cleavage occurs on the 3'-side of the TT dinucleotide at the point of strand exchange. HJ branch migration catalyzed by RuvA-RuvB allows RuvC to scan DNA until it finds its consensus sequence, where it cleaves and resolves the cruciform DNA.</text>
</comment>
<comment type="catalytic activity">
    <reaction evidence="1">
        <text>Endonucleolytic cleavage at a junction such as a reciprocal single-stranded crossover between two homologous DNA duplexes (Holliday junction).</text>
        <dbReference type="EC" id="3.1.21.10"/>
    </reaction>
</comment>
<comment type="cofactor">
    <cofactor evidence="1">
        <name>Mg(2+)</name>
        <dbReference type="ChEBI" id="CHEBI:18420"/>
    </cofactor>
    <text evidence="1">Binds 2 Mg(2+) ion per subunit.</text>
</comment>
<comment type="subunit">
    <text evidence="1">Homodimer which binds Holliday junction (HJ) DNA. The HJ becomes 2-fold symmetrical on binding to RuvC with unstacked arms; it has a different conformation from HJ DNA in complex with RuvA. In the full resolvosome a probable DNA-RuvA(4)-RuvB(12)-RuvC(2) complex forms which resolves the HJ.</text>
</comment>
<comment type="subcellular location">
    <subcellularLocation>
        <location evidence="1">Cytoplasm</location>
    </subcellularLocation>
</comment>
<comment type="similarity">
    <text evidence="1">Belongs to the RuvC family.</text>
</comment>
<protein>
    <recommendedName>
        <fullName evidence="1">Crossover junction endodeoxyribonuclease RuvC</fullName>
        <ecNumber evidence="1">3.1.21.10</ecNumber>
    </recommendedName>
    <alternativeName>
        <fullName evidence="1">Holliday junction nuclease RuvC</fullName>
    </alternativeName>
    <alternativeName>
        <fullName evidence="1">Holliday junction resolvase RuvC</fullName>
    </alternativeName>
</protein>
<organism>
    <name type="scientific">Parafrankia sp. (strain EAN1pec)</name>
    <dbReference type="NCBI Taxonomy" id="298653"/>
    <lineage>
        <taxon>Bacteria</taxon>
        <taxon>Bacillati</taxon>
        <taxon>Actinomycetota</taxon>
        <taxon>Actinomycetes</taxon>
        <taxon>Frankiales</taxon>
        <taxon>Frankiaceae</taxon>
        <taxon>Parafrankia</taxon>
    </lineage>
</organism>
<dbReference type="EC" id="3.1.21.10" evidence="1"/>
<dbReference type="EMBL" id="CP000820">
    <property type="protein sequence ID" value="ABW14504.1"/>
    <property type="molecule type" value="Genomic_DNA"/>
</dbReference>
<dbReference type="RefSeq" id="WP_020462619.1">
    <property type="nucleotide sequence ID" value="NC_009921.1"/>
</dbReference>
<dbReference type="SMR" id="A8KZE8"/>
<dbReference type="STRING" id="298653.Franean1_5146"/>
<dbReference type="KEGG" id="fre:Franean1_5146"/>
<dbReference type="eggNOG" id="COG0817">
    <property type="taxonomic scope" value="Bacteria"/>
</dbReference>
<dbReference type="HOGENOM" id="CLU_091257_0_2_11"/>
<dbReference type="GO" id="GO:0005737">
    <property type="term" value="C:cytoplasm"/>
    <property type="evidence" value="ECO:0007669"/>
    <property type="project" value="UniProtKB-SubCell"/>
</dbReference>
<dbReference type="GO" id="GO:0048476">
    <property type="term" value="C:Holliday junction resolvase complex"/>
    <property type="evidence" value="ECO:0007669"/>
    <property type="project" value="UniProtKB-UniRule"/>
</dbReference>
<dbReference type="GO" id="GO:0008821">
    <property type="term" value="F:crossover junction DNA endonuclease activity"/>
    <property type="evidence" value="ECO:0007669"/>
    <property type="project" value="UniProtKB-UniRule"/>
</dbReference>
<dbReference type="GO" id="GO:0003677">
    <property type="term" value="F:DNA binding"/>
    <property type="evidence" value="ECO:0007669"/>
    <property type="project" value="UniProtKB-KW"/>
</dbReference>
<dbReference type="GO" id="GO:0000287">
    <property type="term" value="F:magnesium ion binding"/>
    <property type="evidence" value="ECO:0007669"/>
    <property type="project" value="UniProtKB-UniRule"/>
</dbReference>
<dbReference type="GO" id="GO:0006310">
    <property type="term" value="P:DNA recombination"/>
    <property type="evidence" value="ECO:0007669"/>
    <property type="project" value="UniProtKB-UniRule"/>
</dbReference>
<dbReference type="GO" id="GO:0006281">
    <property type="term" value="P:DNA repair"/>
    <property type="evidence" value="ECO:0007669"/>
    <property type="project" value="UniProtKB-UniRule"/>
</dbReference>
<dbReference type="CDD" id="cd16962">
    <property type="entry name" value="RuvC"/>
    <property type="match status" value="1"/>
</dbReference>
<dbReference type="FunFam" id="3.30.420.10:FF:000002">
    <property type="entry name" value="Crossover junction endodeoxyribonuclease RuvC"/>
    <property type="match status" value="1"/>
</dbReference>
<dbReference type="Gene3D" id="3.30.420.10">
    <property type="entry name" value="Ribonuclease H-like superfamily/Ribonuclease H"/>
    <property type="match status" value="1"/>
</dbReference>
<dbReference type="HAMAP" id="MF_00034">
    <property type="entry name" value="RuvC"/>
    <property type="match status" value="1"/>
</dbReference>
<dbReference type="InterPro" id="IPR012337">
    <property type="entry name" value="RNaseH-like_sf"/>
</dbReference>
<dbReference type="InterPro" id="IPR036397">
    <property type="entry name" value="RNaseH_sf"/>
</dbReference>
<dbReference type="InterPro" id="IPR020563">
    <property type="entry name" value="X-over_junc_endoDNase_Mg_BS"/>
</dbReference>
<dbReference type="InterPro" id="IPR002176">
    <property type="entry name" value="X-over_junc_endoDNase_RuvC"/>
</dbReference>
<dbReference type="NCBIfam" id="TIGR00228">
    <property type="entry name" value="ruvC"/>
    <property type="match status" value="1"/>
</dbReference>
<dbReference type="PANTHER" id="PTHR30194">
    <property type="entry name" value="CROSSOVER JUNCTION ENDODEOXYRIBONUCLEASE RUVC"/>
    <property type="match status" value="1"/>
</dbReference>
<dbReference type="PANTHER" id="PTHR30194:SF3">
    <property type="entry name" value="CROSSOVER JUNCTION ENDODEOXYRIBONUCLEASE RUVC"/>
    <property type="match status" value="1"/>
</dbReference>
<dbReference type="Pfam" id="PF02075">
    <property type="entry name" value="RuvC"/>
    <property type="match status" value="1"/>
</dbReference>
<dbReference type="PRINTS" id="PR00696">
    <property type="entry name" value="RSOLVASERUVC"/>
</dbReference>
<dbReference type="SUPFAM" id="SSF53098">
    <property type="entry name" value="Ribonuclease H-like"/>
    <property type="match status" value="1"/>
</dbReference>
<dbReference type="PROSITE" id="PS01321">
    <property type="entry name" value="RUVC"/>
    <property type="match status" value="1"/>
</dbReference>
<keyword id="KW-0963">Cytoplasm</keyword>
<keyword id="KW-0227">DNA damage</keyword>
<keyword id="KW-0233">DNA recombination</keyword>
<keyword id="KW-0234">DNA repair</keyword>
<keyword id="KW-0238">DNA-binding</keyword>
<keyword id="KW-0255">Endonuclease</keyword>
<keyword id="KW-0378">Hydrolase</keyword>
<keyword id="KW-0460">Magnesium</keyword>
<keyword id="KW-0479">Metal-binding</keyword>
<keyword id="KW-0540">Nuclease</keyword>
<gene>
    <name evidence="1" type="primary">ruvC</name>
    <name type="ordered locus">Franean1_5146</name>
</gene>
<sequence>MRVLGVDPGLTRCGLGVVDGGPGRRASLVEVGVVRTPASDEVADRLRAVSEGVDEWLDRVRPDAVAVEKVFSQANVRTVMGTAQAGAVAIVAAARRGLPIGLYTPSEVKAAVTGSGRADKAQVGFMVTKLLDLPEAPRPADAADALALALCHLWRGPALARMRAATPARSPGVPGGRR</sequence>